<name>PGK_STACT</name>
<sequence length="396" mass="42709">MAKKHVSDLDLKGKVVLERADFNVPLKDGKITNDNRIVQALPTIEYILDQGGRLVLFSHLGKVKEESDKEKLTLRPVAERLSEKLGKDVNFIPHTRGEVLEKAIAELKDGEVLLVENTRFEDLDGKKESKNDPELGKYWASLGDVFVNDAFGTAHRSHASNVGIASNLESAAGDLMEKEIKFIGGVVNNPDKPVVAILGGAKVSDKIGVIENLLNVADKVLIGGGMAYTFLKAQGYEIGKSLLEADKVDFAKDLLERAGDKIVLPVDAKVAREFSNEAQFTVVTIDQIPADQEALDIGPKTVELFEKELKGAHTVVWNGPMGVFEFENFAQGTVGVCEAIAEMKDATTIIGGGDSAAAAMMLGFEDDFSHISTGGGASLEYLEGKELPGIQSISDK</sequence>
<keyword id="KW-0067">ATP-binding</keyword>
<keyword id="KW-0963">Cytoplasm</keyword>
<keyword id="KW-0324">Glycolysis</keyword>
<keyword id="KW-0418">Kinase</keyword>
<keyword id="KW-0547">Nucleotide-binding</keyword>
<keyword id="KW-1185">Reference proteome</keyword>
<keyword id="KW-0808">Transferase</keyword>
<evidence type="ECO:0000255" key="1">
    <source>
        <dbReference type="HAMAP-Rule" id="MF_00145"/>
    </source>
</evidence>
<gene>
    <name evidence="1" type="primary">pgk</name>
    <name type="ordered locus">Sca_0425</name>
</gene>
<accession>B9DJJ6</accession>
<proteinExistence type="inferred from homology"/>
<feature type="chain" id="PRO_1000192849" description="Phosphoglycerate kinase">
    <location>
        <begin position="1"/>
        <end position="396"/>
    </location>
</feature>
<feature type="binding site" evidence="1">
    <location>
        <begin position="21"/>
        <end position="23"/>
    </location>
    <ligand>
        <name>substrate</name>
    </ligand>
</feature>
<feature type="binding site" evidence="1">
    <location>
        <position position="36"/>
    </location>
    <ligand>
        <name>substrate</name>
    </ligand>
</feature>
<feature type="binding site" evidence="1">
    <location>
        <begin position="59"/>
        <end position="62"/>
    </location>
    <ligand>
        <name>substrate</name>
    </ligand>
</feature>
<feature type="binding site" evidence="1">
    <location>
        <position position="119"/>
    </location>
    <ligand>
        <name>substrate</name>
    </ligand>
</feature>
<feature type="binding site" evidence="1">
    <location>
        <position position="156"/>
    </location>
    <ligand>
        <name>substrate</name>
    </ligand>
</feature>
<feature type="binding site" evidence="1">
    <location>
        <position position="206"/>
    </location>
    <ligand>
        <name>ATP</name>
        <dbReference type="ChEBI" id="CHEBI:30616"/>
    </ligand>
</feature>
<feature type="binding site" evidence="1">
    <location>
        <position position="325"/>
    </location>
    <ligand>
        <name>ATP</name>
        <dbReference type="ChEBI" id="CHEBI:30616"/>
    </ligand>
</feature>
<feature type="binding site" evidence="1">
    <location>
        <begin position="352"/>
        <end position="355"/>
    </location>
    <ligand>
        <name>ATP</name>
        <dbReference type="ChEBI" id="CHEBI:30616"/>
    </ligand>
</feature>
<dbReference type="EC" id="2.7.2.3" evidence="1"/>
<dbReference type="EMBL" id="AM295250">
    <property type="protein sequence ID" value="CAL27339.1"/>
    <property type="molecule type" value="Genomic_DNA"/>
</dbReference>
<dbReference type="RefSeq" id="WP_015899683.1">
    <property type="nucleotide sequence ID" value="NC_012121.1"/>
</dbReference>
<dbReference type="SMR" id="B9DJJ6"/>
<dbReference type="GeneID" id="93795356"/>
<dbReference type="KEGG" id="sca:SCA_0425"/>
<dbReference type="eggNOG" id="COG0126">
    <property type="taxonomic scope" value="Bacteria"/>
</dbReference>
<dbReference type="HOGENOM" id="CLU_025427_0_2_9"/>
<dbReference type="OrthoDB" id="9808460at2"/>
<dbReference type="BioCyc" id="SCAR396513:SCA_RS02165-MONOMER"/>
<dbReference type="UniPathway" id="UPA00109">
    <property type="reaction ID" value="UER00185"/>
</dbReference>
<dbReference type="Proteomes" id="UP000000444">
    <property type="component" value="Chromosome"/>
</dbReference>
<dbReference type="GO" id="GO:0005829">
    <property type="term" value="C:cytosol"/>
    <property type="evidence" value="ECO:0007669"/>
    <property type="project" value="TreeGrafter"/>
</dbReference>
<dbReference type="GO" id="GO:0043531">
    <property type="term" value="F:ADP binding"/>
    <property type="evidence" value="ECO:0007669"/>
    <property type="project" value="TreeGrafter"/>
</dbReference>
<dbReference type="GO" id="GO:0005524">
    <property type="term" value="F:ATP binding"/>
    <property type="evidence" value="ECO:0007669"/>
    <property type="project" value="UniProtKB-KW"/>
</dbReference>
<dbReference type="GO" id="GO:0004618">
    <property type="term" value="F:phosphoglycerate kinase activity"/>
    <property type="evidence" value="ECO:0007669"/>
    <property type="project" value="UniProtKB-UniRule"/>
</dbReference>
<dbReference type="GO" id="GO:0006094">
    <property type="term" value="P:gluconeogenesis"/>
    <property type="evidence" value="ECO:0007669"/>
    <property type="project" value="TreeGrafter"/>
</dbReference>
<dbReference type="GO" id="GO:0006096">
    <property type="term" value="P:glycolytic process"/>
    <property type="evidence" value="ECO:0007669"/>
    <property type="project" value="UniProtKB-UniRule"/>
</dbReference>
<dbReference type="CDD" id="cd00318">
    <property type="entry name" value="Phosphoglycerate_kinase"/>
    <property type="match status" value="1"/>
</dbReference>
<dbReference type="FunFam" id="3.40.50.1260:FF:000001">
    <property type="entry name" value="Phosphoglycerate kinase"/>
    <property type="match status" value="1"/>
</dbReference>
<dbReference type="FunFam" id="3.40.50.1260:FF:000008">
    <property type="entry name" value="Phosphoglycerate kinase"/>
    <property type="match status" value="1"/>
</dbReference>
<dbReference type="Gene3D" id="3.40.50.1260">
    <property type="entry name" value="Phosphoglycerate kinase, N-terminal domain"/>
    <property type="match status" value="2"/>
</dbReference>
<dbReference type="HAMAP" id="MF_00145">
    <property type="entry name" value="Phosphoglyc_kinase"/>
    <property type="match status" value="1"/>
</dbReference>
<dbReference type="InterPro" id="IPR001576">
    <property type="entry name" value="Phosphoglycerate_kinase"/>
</dbReference>
<dbReference type="InterPro" id="IPR015824">
    <property type="entry name" value="Phosphoglycerate_kinase_N"/>
</dbReference>
<dbReference type="InterPro" id="IPR036043">
    <property type="entry name" value="Phosphoglycerate_kinase_sf"/>
</dbReference>
<dbReference type="PANTHER" id="PTHR11406">
    <property type="entry name" value="PHOSPHOGLYCERATE KINASE"/>
    <property type="match status" value="1"/>
</dbReference>
<dbReference type="PANTHER" id="PTHR11406:SF23">
    <property type="entry name" value="PHOSPHOGLYCERATE KINASE 1, CHLOROPLASTIC-RELATED"/>
    <property type="match status" value="1"/>
</dbReference>
<dbReference type="Pfam" id="PF00162">
    <property type="entry name" value="PGK"/>
    <property type="match status" value="1"/>
</dbReference>
<dbReference type="PIRSF" id="PIRSF000724">
    <property type="entry name" value="Pgk"/>
    <property type="match status" value="1"/>
</dbReference>
<dbReference type="PRINTS" id="PR00477">
    <property type="entry name" value="PHGLYCKINASE"/>
</dbReference>
<dbReference type="SUPFAM" id="SSF53748">
    <property type="entry name" value="Phosphoglycerate kinase"/>
    <property type="match status" value="1"/>
</dbReference>
<reference key="1">
    <citation type="journal article" date="2009" name="Appl. Environ. Microbiol.">
        <title>Genome analysis of the meat starter culture bacterium Staphylococcus carnosus TM300.</title>
        <authorList>
            <person name="Rosenstein R."/>
            <person name="Nerz C."/>
            <person name="Biswas L."/>
            <person name="Resch A."/>
            <person name="Raddatz G."/>
            <person name="Schuster S.C."/>
            <person name="Goetz F."/>
        </authorList>
    </citation>
    <scope>NUCLEOTIDE SEQUENCE [LARGE SCALE GENOMIC DNA]</scope>
    <source>
        <strain>TM300</strain>
    </source>
</reference>
<protein>
    <recommendedName>
        <fullName evidence="1">Phosphoglycerate kinase</fullName>
        <ecNumber evidence="1">2.7.2.3</ecNumber>
    </recommendedName>
</protein>
<comment type="catalytic activity">
    <reaction evidence="1">
        <text>(2R)-3-phosphoglycerate + ATP = (2R)-3-phospho-glyceroyl phosphate + ADP</text>
        <dbReference type="Rhea" id="RHEA:14801"/>
        <dbReference type="ChEBI" id="CHEBI:30616"/>
        <dbReference type="ChEBI" id="CHEBI:57604"/>
        <dbReference type="ChEBI" id="CHEBI:58272"/>
        <dbReference type="ChEBI" id="CHEBI:456216"/>
        <dbReference type="EC" id="2.7.2.3"/>
    </reaction>
</comment>
<comment type="pathway">
    <text evidence="1">Carbohydrate degradation; glycolysis; pyruvate from D-glyceraldehyde 3-phosphate: step 2/5.</text>
</comment>
<comment type="subunit">
    <text evidence="1">Monomer.</text>
</comment>
<comment type="subcellular location">
    <subcellularLocation>
        <location evidence="1">Cytoplasm</location>
    </subcellularLocation>
</comment>
<comment type="similarity">
    <text evidence="1">Belongs to the phosphoglycerate kinase family.</text>
</comment>
<organism>
    <name type="scientific">Staphylococcus carnosus (strain TM300)</name>
    <dbReference type="NCBI Taxonomy" id="396513"/>
    <lineage>
        <taxon>Bacteria</taxon>
        <taxon>Bacillati</taxon>
        <taxon>Bacillota</taxon>
        <taxon>Bacilli</taxon>
        <taxon>Bacillales</taxon>
        <taxon>Staphylococcaceae</taxon>
        <taxon>Staphylococcus</taxon>
    </lineage>
</organism>